<accession>A8YTJ0</accession>
<dbReference type="EC" id="6.1.1.7" evidence="1"/>
<dbReference type="EMBL" id="CP000517">
    <property type="protein sequence ID" value="ABX26646.1"/>
    <property type="molecule type" value="Genomic_DNA"/>
</dbReference>
<dbReference type="RefSeq" id="WP_012211450.1">
    <property type="nucleotide sequence ID" value="NC_010080.1"/>
</dbReference>
<dbReference type="SMR" id="A8YTJ0"/>
<dbReference type="KEGG" id="lhe:lhv_0438"/>
<dbReference type="eggNOG" id="COG0013">
    <property type="taxonomic scope" value="Bacteria"/>
</dbReference>
<dbReference type="HOGENOM" id="CLU_004485_1_1_9"/>
<dbReference type="Proteomes" id="UP000000790">
    <property type="component" value="Chromosome"/>
</dbReference>
<dbReference type="GO" id="GO:0005829">
    <property type="term" value="C:cytosol"/>
    <property type="evidence" value="ECO:0007669"/>
    <property type="project" value="TreeGrafter"/>
</dbReference>
<dbReference type="GO" id="GO:0004813">
    <property type="term" value="F:alanine-tRNA ligase activity"/>
    <property type="evidence" value="ECO:0007669"/>
    <property type="project" value="UniProtKB-UniRule"/>
</dbReference>
<dbReference type="GO" id="GO:0002161">
    <property type="term" value="F:aminoacyl-tRNA deacylase activity"/>
    <property type="evidence" value="ECO:0007669"/>
    <property type="project" value="TreeGrafter"/>
</dbReference>
<dbReference type="GO" id="GO:0005524">
    <property type="term" value="F:ATP binding"/>
    <property type="evidence" value="ECO:0007669"/>
    <property type="project" value="UniProtKB-UniRule"/>
</dbReference>
<dbReference type="GO" id="GO:0140096">
    <property type="term" value="F:catalytic activity, acting on a protein"/>
    <property type="evidence" value="ECO:0007669"/>
    <property type="project" value="UniProtKB-ARBA"/>
</dbReference>
<dbReference type="GO" id="GO:0016740">
    <property type="term" value="F:transferase activity"/>
    <property type="evidence" value="ECO:0007669"/>
    <property type="project" value="UniProtKB-ARBA"/>
</dbReference>
<dbReference type="GO" id="GO:0000049">
    <property type="term" value="F:tRNA binding"/>
    <property type="evidence" value="ECO:0007669"/>
    <property type="project" value="UniProtKB-KW"/>
</dbReference>
<dbReference type="GO" id="GO:0008270">
    <property type="term" value="F:zinc ion binding"/>
    <property type="evidence" value="ECO:0007669"/>
    <property type="project" value="UniProtKB-UniRule"/>
</dbReference>
<dbReference type="GO" id="GO:0006419">
    <property type="term" value="P:alanyl-tRNA aminoacylation"/>
    <property type="evidence" value="ECO:0007669"/>
    <property type="project" value="UniProtKB-UniRule"/>
</dbReference>
<dbReference type="CDD" id="cd00673">
    <property type="entry name" value="AlaRS_core"/>
    <property type="match status" value="1"/>
</dbReference>
<dbReference type="FunFam" id="3.10.310.40:FF:000001">
    <property type="entry name" value="Alanine--tRNA ligase"/>
    <property type="match status" value="1"/>
</dbReference>
<dbReference type="FunFam" id="3.30.54.20:FF:000001">
    <property type="entry name" value="Alanine--tRNA ligase"/>
    <property type="match status" value="1"/>
</dbReference>
<dbReference type="FunFam" id="3.30.930.10:FF:000046">
    <property type="entry name" value="Alanine--tRNA ligase"/>
    <property type="match status" value="1"/>
</dbReference>
<dbReference type="FunFam" id="3.30.980.10:FF:000004">
    <property type="entry name" value="Alanine--tRNA ligase, cytoplasmic"/>
    <property type="match status" value="1"/>
</dbReference>
<dbReference type="Gene3D" id="2.40.30.130">
    <property type="match status" value="1"/>
</dbReference>
<dbReference type="Gene3D" id="3.10.310.40">
    <property type="match status" value="1"/>
</dbReference>
<dbReference type="Gene3D" id="3.30.54.20">
    <property type="match status" value="1"/>
</dbReference>
<dbReference type="Gene3D" id="3.30.930.10">
    <property type="entry name" value="Bira Bifunctional Protein, Domain 2"/>
    <property type="match status" value="1"/>
</dbReference>
<dbReference type="Gene3D" id="3.30.980.10">
    <property type="entry name" value="Threonyl-trna Synthetase, Chain A, domain 2"/>
    <property type="match status" value="1"/>
</dbReference>
<dbReference type="HAMAP" id="MF_00036_B">
    <property type="entry name" value="Ala_tRNA_synth_B"/>
    <property type="match status" value="1"/>
</dbReference>
<dbReference type="InterPro" id="IPR045864">
    <property type="entry name" value="aa-tRNA-synth_II/BPL/LPL"/>
</dbReference>
<dbReference type="InterPro" id="IPR002318">
    <property type="entry name" value="Ala-tRNA-lgiase_IIc"/>
</dbReference>
<dbReference type="InterPro" id="IPR018162">
    <property type="entry name" value="Ala-tRNA-ligase_IIc_anticod-bd"/>
</dbReference>
<dbReference type="InterPro" id="IPR018165">
    <property type="entry name" value="Ala-tRNA-synth_IIc_core"/>
</dbReference>
<dbReference type="InterPro" id="IPR018164">
    <property type="entry name" value="Ala-tRNA-synth_IIc_N"/>
</dbReference>
<dbReference type="InterPro" id="IPR050058">
    <property type="entry name" value="Ala-tRNA_ligase"/>
</dbReference>
<dbReference type="InterPro" id="IPR023033">
    <property type="entry name" value="Ala_tRNA_ligase_euk/bac"/>
</dbReference>
<dbReference type="InterPro" id="IPR003156">
    <property type="entry name" value="DHHA1_dom"/>
</dbReference>
<dbReference type="InterPro" id="IPR018163">
    <property type="entry name" value="Thr/Ala-tRNA-synth_IIc_edit"/>
</dbReference>
<dbReference type="InterPro" id="IPR009000">
    <property type="entry name" value="Transl_B-barrel_sf"/>
</dbReference>
<dbReference type="InterPro" id="IPR012947">
    <property type="entry name" value="tRNA_SAD"/>
</dbReference>
<dbReference type="NCBIfam" id="TIGR00344">
    <property type="entry name" value="alaS"/>
    <property type="match status" value="1"/>
</dbReference>
<dbReference type="PANTHER" id="PTHR11777:SF9">
    <property type="entry name" value="ALANINE--TRNA LIGASE, CYTOPLASMIC"/>
    <property type="match status" value="1"/>
</dbReference>
<dbReference type="PANTHER" id="PTHR11777">
    <property type="entry name" value="ALANYL-TRNA SYNTHETASE"/>
    <property type="match status" value="1"/>
</dbReference>
<dbReference type="Pfam" id="PF02272">
    <property type="entry name" value="DHHA1"/>
    <property type="match status" value="1"/>
</dbReference>
<dbReference type="Pfam" id="PF01411">
    <property type="entry name" value="tRNA-synt_2c"/>
    <property type="match status" value="1"/>
</dbReference>
<dbReference type="Pfam" id="PF07973">
    <property type="entry name" value="tRNA_SAD"/>
    <property type="match status" value="1"/>
</dbReference>
<dbReference type="PRINTS" id="PR00980">
    <property type="entry name" value="TRNASYNTHALA"/>
</dbReference>
<dbReference type="SMART" id="SM00863">
    <property type="entry name" value="tRNA_SAD"/>
    <property type="match status" value="1"/>
</dbReference>
<dbReference type="SUPFAM" id="SSF55681">
    <property type="entry name" value="Class II aaRS and biotin synthetases"/>
    <property type="match status" value="1"/>
</dbReference>
<dbReference type="SUPFAM" id="SSF101353">
    <property type="entry name" value="Putative anticodon-binding domain of alanyl-tRNA synthetase (AlaRS)"/>
    <property type="match status" value="1"/>
</dbReference>
<dbReference type="SUPFAM" id="SSF55186">
    <property type="entry name" value="ThrRS/AlaRS common domain"/>
    <property type="match status" value="1"/>
</dbReference>
<dbReference type="SUPFAM" id="SSF50447">
    <property type="entry name" value="Translation proteins"/>
    <property type="match status" value="1"/>
</dbReference>
<dbReference type="PROSITE" id="PS50860">
    <property type="entry name" value="AA_TRNA_LIGASE_II_ALA"/>
    <property type="match status" value="1"/>
</dbReference>
<organism>
    <name type="scientific">Lactobacillus helveticus (strain DPC 4571)</name>
    <dbReference type="NCBI Taxonomy" id="405566"/>
    <lineage>
        <taxon>Bacteria</taxon>
        <taxon>Bacillati</taxon>
        <taxon>Bacillota</taxon>
        <taxon>Bacilli</taxon>
        <taxon>Lactobacillales</taxon>
        <taxon>Lactobacillaceae</taxon>
        <taxon>Lactobacillus</taxon>
    </lineage>
</organism>
<reference key="1">
    <citation type="journal article" date="2008" name="J. Bacteriol.">
        <title>Genome sequence of Lactobacillus helveticus: an organism distinguished by selective gene loss and IS element expansion.</title>
        <authorList>
            <person name="Callanan M."/>
            <person name="Kaleta P."/>
            <person name="O'Callaghan J."/>
            <person name="O'Sullivan O."/>
            <person name="Jordan K."/>
            <person name="McAuliffe O."/>
            <person name="Sangrador-Vegas A."/>
            <person name="Slattery L."/>
            <person name="Fitzgerald G.F."/>
            <person name="Beresford T."/>
            <person name="Ross R.P."/>
        </authorList>
    </citation>
    <scope>NUCLEOTIDE SEQUENCE [LARGE SCALE GENOMIC DNA]</scope>
    <source>
        <strain>DPC 4571</strain>
    </source>
</reference>
<comment type="function">
    <text evidence="1">Catalyzes the attachment of alanine to tRNA(Ala) in a two-step reaction: alanine is first activated by ATP to form Ala-AMP and then transferred to the acceptor end of tRNA(Ala). Also edits incorrectly charged Ser-tRNA(Ala) and Gly-tRNA(Ala) via its editing domain.</text>
</comment>
<comment type="catalytic activity">
    <reaction evidence="1">
        <text>tRNA(Ala) + L-alanine + ATP = L-alanyl-tRNA(Ala) + AMP + diphosphate</text>
        <dbReference type="Rhea" id="RHEA:12540"/>
        <dbReference type="Rhea" id="RHEA-COMP:9657"/>
        <dbReference type="Rhea" id="RHEA-COMP:9923"/>
        <dbReference type="ChEBI" id="CHEBI:30616"/>
        <dbReference type="ChEBI" id="CHEBI:33019"/>
        <dbReference type="ChEBI" id="CHEBI:57972"/>
        <dbReference type="ChEBI" id="CHEBI:78442"/>
        <dbReference type="ChEBI" id="CHEBI:78497"/>
        <dbReference type="ChEBI" id="CHEBI:456215"/>
        <dbReference type="EC" id="6.1.1.7"/>
    </reaction>
</comment>
<comment type="cofactor">
    <cofactor evidence="1">
        <name>Zn(2+)</name>
        <dbReference type="ChEBI" id="CHEBI:29105"/>
    </cofactor>
    <text evidence="1">Binds 1 zinc ion per subunit.</text>
</comment>
<comment type="subcellular location">
    <subcellularLocation>
        <location evidence="1">Cytoplasm</location>
    </subcellularLocation>
</comment>
<comment type="domain">
    <text evidence="1">Consists of three domains; the N-terminal catalytic domain, the editing domain and the C-terminal C-Ala domain. The editing domain removes incorrectly charged amino acids, while the C-Ala domain, along with tRNA(Ala), serves as a bridge to cooperatively bring together the editing and aminoacylation centers thus stimulating deacylation of misacylated tRNAs.</text>
</comment>
<comment type="similarity">
    <text evidence="1">Belongs to the class-II aminoacyl-tRNA synthetase family.</text>
</comment>
<feature type="chain" id="PRO_0000347648" description="Alanine--tRNA ligase">
    <location>
        <begin position="1"/>
        <end position="879"/>
    </location>
</feature>
<feature type="binding site" evidence="1">
    <location>
        <position position="567"/>
    </location>
    <ligand>
        <name>Zn(2+)</name>
        <dbReference type="ChEBI" id="CHEBI:29105"/>
    </ligand>
</feature>
<feature type="binding site" evidence="1">
    <location>
        <position position="571"/>
    </location>
    <ligand>
        <name>Zn(2+)</name>
        <dbReference type="ChEBI" id="CHEBI:29105"/>
    </ligand>
</feature>
<feature type="binding site" evidence="1">
    <location>
        <position position="669"/>
    </location>
    <ligand>
        <name>Zn(2+)</name>
        <dbReference type="ChEBI" id="CHEBI:29105"/>
    </ligand>
</feature>
<feature type="binding site" evidence="1">
    <location>
        <position position="673"/>
    </location>
    <ligand>
        <name>Zn(2+)</name>
        <dbReference type="ChEBI" id="CHEBI:29105"/>
    </ligand>
</feature>
<sequence>MKKLTSSEFRQMFLDFFKDHGHMIMPSASLIPQDDPTLLWINSGVATMKKYFDGSVVPKNHRITSSQKSIRTNDIENVGKTARHQTFFEMLGNFSVGDYFRDEAIPWAWEFLTSPKWLGLPKEKLYCTVYPKDVDSQRVWEKAGMPADHIVKLEDNFWDIGEGPCGPDTEIFYDRGQENNDVAEDDPENFPGGENARYLEIWNIVFSQYNHLPNGKYVDQPHKNIDTGMGLERVLSILQDAPTNFETDLFLPIIHATEEMTDGKKYGENKEDTTAFKIIADHVRAVSFAIADGALPSNSGRGYVLRRLIRRADLHGQRLGIKGAFLYKLVPVVGKIMQSHYPEVMDQRGFIENVIQNEEKRFQATLDTGLTLLDDLIDKAKKSDDKTISGKDAFKMFDTYGFPYELTFESAQDAGLKVDKKGFDAEMQAQKERARKARGDLQSMGRQDVTLMNIKDKSVFERDTYEEPHAKLLDIVVDDKLVDKADGEHATLVFDKTPFYAERGGQVADHGNIYDQDGELVAKVTDVQHAPNNQNLHFVDLILPMEKGKEYVLKIDKERREGLRHSHSATHLLHAALRQVLGEHTHQAGSLVDPDYLRFDFTAMEPMTPREIKSVEELVNQKIWEAIDVKTTITTPEEGEKMGALALFDGKYGDKVRVVQMGDFSSEFCGGTHCSNTNQIGIFKIISESAVGAGMRRIEAVTSKKAYEYLANRSSLLDDIQADVKATKPDNIIDKIDSLESDLHDSQKQVEALTKQINQAKAGQIFDDVKQAGDLTVIATVADVNGMNDLRELADNWKSGNKSDVLVLAAENDGKANMIISLGQKALDKGLKAGDLIKKVAPIFGGGGGGRPNMAQAGGKRPEGLNDAIKAVIEEISKN</sequence>
<name>SYA_LACH4</name>
<keyword id="KW-0030">Aminoacyl-tRNA synthetase</keyword>
<keyword id="KW-0067">ATP-binding</keyword>
<keyword id="KW-0963">Cytoplasm</keyword>
<keyword id="KW-0436">Ligase</keyword>
<keyword id="KW-0479">Metal-binding</keyword>
<keyword id="KW-0547">Nucleotide-binding</keyword>
<keyword id="KW-0648">Protein biosynthesis</keyword>
<keyword id="KW-0694">RNA-binding</keyword>
<keyword id="KW-0820">tRNA-binding</keyword>
<keyword id="KW-0862">Zinc</keyword>
<proteinExistence type="inferred from homology"/>
<protein>
    <recommendedName>
        <fullName evidence="1">Alanine--tRNA ligase</fullName>
        <ecNumber evidence="1">6.1.1.7</ecNumber>
    </recommendedName>
    <alternativeName>
        <fullName evidence="1">Alanyl-tRNA synthetase</fullName>
        <shortName evidence="1">AlaRS</shortName>
    </alternativeName>
</protein>
<evidence type="ECO:0000255" key="1">
    <source>
        <dbReference type="HAMAP-Rule" id="MF_00036"/>
    </source>
</evidence>
<gene>
    <name evidence="1" type="primary">alaS</name>
    <name type="ordered locus">lhv_0438</name>
</gene>